<evidence type="ECO:0000269" key="1">
    <source>
    </source>
</evidence>
<evidence type="ECO:0000305" key="2"/>
<feature type="peptide" id="PRO_0000044398" description="Phyllomedusin">
    <location>
        <begin position="1"/>
        <end position="10"/>
    </location>
</feature>
<feature type="modified residue" description="Pyrrolidone carboxylic acid" evidence="1">
    <location>
        <position position="1"/>
    </location>
</feature>
<feature type="modified residue" description="Methionine amide" evidence="1">
    <location>
        <position position="10"/>
    </location>
</feature>
<proteinExistence type="evidence at protein level"/>
<name>TKN_PHYBI</name>
<protein>
    <recommendedName>
        <fullName>Phyllomedusin</fullName>
    </recommendedName>
</protein>
<organism>
    <name type="scientific">Phyllomedusa bicolor</name>
    <name type="common">Two-colored leaf frog</name>
    <name type="synonym">Rana bicolor</name>
    <dbReference type="NCBI Taxonomy" id="8393"/>
    <lineage>
        <taxon>Eukaryota</taxon>
        <taxon>Metazoa</taxon>
        <taxon>Chordata</taxon>
        <taxon>Craniata</taxon>
        <taxon>Vertebrata</taxon>
        <taxon>Euteleostomi</taxon>
        <taxon>Amphibia</taxon>
        <taxon>Batrachia</taxon>
        <taxon>Anura</taxon>
        <taxon>Neobatrachia</taxon>
        <taxon>Hyloidea</taxon>
        <taxon>Hylidae</taxon>
        <taxon>Phyllomedusinae</taxon>
        <taxon>Phyllomedusa</taxon>
    </lineage>
</organism>
<reference key="1">
    <citation type="journal article" date="1970" name="Experientia">
        <title>Occurrence of phyllomedusin, a physalaemin-like decapeptide, in the skin of Phyllomedusa bicolor.</title>
        <authorList>
            <person name="Anastasi A."/>
            <person name="Erspamer G.F."/>
        </authorList>
    </citation>
    <scope>PROTEIN SEQUENCE</scope>
    <scope>PYROGLUTAMATE FORMATION AT GLN-1</scope>
    <scope>AMIDATION AT MET-10</scope>
    <source>
        <tissue>Skin secretion</tissue>
    </source>
</reference>
<accession>P08610</accession>
<dbReference type="PIR" id="S07202">
    <property type="entry name" value="S07202"/>
</dbReference>
<dbReference type="GO" id="GO:0005576">
    <property type="term" value="C:extracellular region"/>
    <property type="evidence" value="ECO:0007669"/>
    <property type="project" value="UniProtKB-SubCell"/>
</dbReference>
<dbReference type="GO" id="GO:0006952">
    <property type="term" value="P:defense response"/>
    <property type="evidence" value="ECO:0007669"/>
    <property type="project" value="UniProtKB-KW"/>
</dbReference>
<dbReference type="GO" id="GO:0007218">
    <property type="term" value="P:neuropeptide signaling pathway"/>
    <property type="evidence" value="ECO:0007669"/>
    <property type="project" value="UniProtKB-KW"/>
</dbReference>
<dbReference type="InterPro" id="IPR013055">
    <property type="entry name" value="Tachy_Neuro_lke_CS"/>
</dbReference>
<dbReference type="PROSITE" id="PS00267">
    <property type="entry name" value="TACHYKININ"/>
    <property type="match status" value="1"/>
</dbReference>
<keyword id="KW-0027">Amidation</keyword>
<keyword id="KW-0878">Amphibian defense peptide</keyword>
<keyword id="KW-0903">Direct protein sequencing</keyword>
<keyword id="KW-0527">Neuropeptide</keyword>
<keyword id="KW-0873">Pyrrolidone carboxylic acid</keyword>
<keyword id="KW-0964">Secreted</keyword>
<sequence>QNPNRFIGLM</sequence>
<comment type="function">
    <text>Tachykinins are active peptides which excite neurons, evoke behavioral responses, are potent vasodilators and secretagogues, and contract (directly or indirectly) many smooth muscles.</text>
</comment>
<comment type="subcellular location">
    <subcellularLocation>
        <location>Secreted</location>
    </subcellularLocation>
</comment>
<comment type="tissue specificity">
    <text>Expressed by the skin glands.</text>
</comment>
<comment type="similarity">
    <text evidence="2">Belongs to the tachykinin family.</text>
</comment>